<protein>
    <recommendedName>
        <fullName evidence="1">Ribonuclease P protein component</fullName>
        <shortName evidence="1">RNase P protein</shortName>
        <shortName evidence="1">RNaseP protein</shortName>
        <ecNumber evidence="1">3.1.26.5</ecNumber>
    </recommendedName>
    <alternativeName>
        <fullName evidence="1">Protein C5</fullName>
    </alternativeName>
</protein>
<feature type="chain" id="PRO_1000021425" description="Ribonuclease P protein component">
    <location>
        <begin position="1"/>
        <end position="119"/>
    </location>
</feature>
<name>RNPA_LISW6</name>
<organism>
    <name type="scientific">Listeria welshimeri serovar 6b (strain ATCC 35897 / DSM 20650 / CCUG 15529 / CIP 8149 / NCTC 11857 / SLCC 5334 / V8)</name>
    <dbReference type="NCBI Taxonomy" id="386043"/>
    <lineage>
        <taxon>Bacteria</taxon>
        <taxon>Bacillati</taxon>
        <taxon>Bacillota</taxon>
        <taxon>Bacilli</taxon>
        <taxon>Bacillales</taxon>
        <taxon>Listeriaceae</taxon>
        <taxon>Listeria</taxon>
    </lineage>
</organism>
<dbReference type="EC" id="3.1.26.5" evidence="1"/>
<dbReference type="EMBL" id="AM263198">
    <property type="protein sequence ID" value="CAK22196.1"/>
    <property type="molecule type" value="Genomic_DNA"/>
</dbReference>
<dbReference type="RefSeq" id="WP_011703467.1">
    <property type="nucleotide sequence ID" value="NC_008555.1"/>
</dbReference>
<dbReference type="SMR" id="A0AMG4"/>
<dbReference type="STRING" id="386043.lwe2778"/>
<dbReference type="GeneID" id="61190700"/>
<dbReference type="KEGG" id="lwe:lwe2778"/>
<dbReference type="eggNOG" id="COG0594">
    <property type="taxonomic scope" value="Bacteria"/>
</dbReference>
<dbReference type="HOGENOM" id="CLU_117179_9_1_9"/>
<dbReference type="OrthoDB" id="9810867at2"/>
<dbReference type="Proteomes" id="UP000000779">
    <property type="component" value="Chromosome"/>
</dbReference>
<dbReference type="GO" id="GO:0030677">
    <property type="term" value="C:ribonuclease P complex"/>
    <property type="evidence" value="ECO:0007669"/>
    <property type="project" value="TreeGrafter"/>
</dbReference>
<dbReference type="GO" id="GO:0042781">
    <property type="term" value="F:3'-tRNA processing endoribonuclease activity"/>
    <property type="evidence" value="ECO:0007669"/>
    <property type="project" value="TreeGrafter"/>
</dbReference>
<dbReference type="GO" id="GO:0004526">
    <property type="term" value="F:ribonuclease P activity"/>
    <property type="evidence" value="ECO:0007669"/>
    <property type="project" value="UniProtKB-UniRule"/>
</dbReference>
<dbReference type="GO" id="GO:0000049">
    <property type="term" value="F:tRNA binding"/>
    <property type="evidence" value="ECO:0007669"/>
    <property type="project" value="UniProtKB-UniRule"/>
</dbReference>
<dbReference type="GO" id="GO:0001682">
    <property type="term" value="P:tRNA 5'-leader removal"/>
    <property type="evidence" value="ECO:0007669"/>
    <property type="project" value="UniProtKB-UniRule"/>
</dbReference>
<dbReference type="FunFam" id="3.30.230.10:FF:000021">
    <property type="entry name" value="Ribonuclease P protein component"/>
    <property type="match status" value="1"/>
</dbReference>
<dbReference type="Gene3D" id="3.30.230.10">
    <property type="match status" value="1"/>
</dbReference>
<dbReference type="HAMAP" id="MF_00227">
    <property type="entry name" value="RNase_P"/>
    <property type="match status" value="1"/>
</dbReference>
<dbReference type="InterPro" id="IPR020568">
    <property type="entry name" value="Ribosomal_Su5_D2-typ_SF"/>
</dbReference>
<dbReference type="InterPro" id="IPR014721">
    <property type="entry name" value="Ribsml_uS5_D2-typ_fold_subgr"/>
</dbReference>
<dbReference type="InterPro" id="IPR000100">
    <property type="entry name" value="RNase_P"/>
</dbReference>
<dbReference type="InterPro" id="IPR020539">
    <property type="entry name" value="RNase_P_CS"/>
</dbReference>
<dbReference type="NCBIfam" id="TIGR00188">
    <property type="entry name" value="rnpA"/>
    <property type="match status" value="1"/>
</dbReference>
<dbReference type="PANTHER" id="PTHR33992">
    <property type="entry name" value="RIBONUCLEASE P PROTEIN COMPONENT"/>
    <property type="match status" value="1"/>
</dbReference>
<dbReference type="PANTHER" id="PTHR33992:SF1">
    <property type="entry name" value="RIBONUCLEASE P PROTEIN COMPONENT"/>
    <property type="match status" value="1"/>
</dbReference>
<dbReference type="Pfam" id="PF00825">
    <property type="entry name" value="Ribonuclease_P"/>
    <property type="match status" value="1"/>
</dbReference>
<dbReference type="SUPFAM" id="SSF54211">
    <property type="entry name" value="Ribosomal protein S5 domain 2-like"/>
    <property type="match status" value="1"/>
</dbReference>
<dbReference type="PROSITE" id="PS00648">
    <property type="entry name" value="RIBONUCLEASE_P"/>
    <property type="match status" value="1"/>
</dbReference>
<evidence type="ECO:0000255" key="1">
    <source>
        <dbReference type="HAMAP-Rule" id="MF_00227"/>
    </source>
</evidence>
<keyword id="KW-0255">Endonuclease</keyword>
<keyword id="KW-0378">Hydrolase</keyword>
<keyword id="KW-0540">Nuclease</keyword>
<keyword id="KW-0694">RNA-binding</keyword>
<keyword id="KW-0819">tRNA processing</keyword>
<accession>A0AMG4</accession>
<gene>
    <name evidence="1" type="primary">rnpA</name>
    <name type="ordered locus">lwe2778</name>
</gene>
<reference key="1">
    <citation type="journal article" date="2006" name="J. Bacteriol.">
        <title>Whole-genome sequence of Listeria welshimeri reveals common steps in genome reduction with Listeria innocua as compared to Listeria monocytogenes.</title>
        <authorList>
            <person name="Hain T."/>
            <person name="Steinweg C."/>
            <person name="Kuenne C.T."/>
            <person name="Billion A."/>
            <person name="Ghai R."/>
            <person name="Chatterjee S.S."/>
            <person name="Domann E."/>
            <person name="Kaerst U."/>
            <person name="Goesmann A."/>
            <person name="Bekel T."/>
            <person name="Bartels D."/>
            <person name="Kaiser O."/>
            <person name="Meyer F."/>
            <person name="Puehler A."/>
            <person name="Weisshaar B."/>
            <person name="Wehland J."/>
            <person name="Liang C."/>
            <person name="Dandekar T."/>
            <person name="Lampidis R."/>
            <person name="Kreft J."/>
            <person name="Goebel W."/>
            <person name="Chakraborty T."/>
        </authorList>
    </citation>
    <scope>NUCLEOTIDE SEQUENCE [LARGE SCALE GENOMIC DNA]</scope>
    <source>
        <strain>ATCC 35897 / DSM 20650 / CCUG 15529 / CIP 8149 / NCTC 11857 / SLCC 5334 / V8</strain>
    </source>
</reference>
<comment type="function">
    <text evidence="1">RNaseP catalyzes the removal of the 5'-leader sequence from pre-tRNA to produce the mature 5'-terminus. It can also cleave other RNA substrates such as 4.5S RNA. The protein component plays an auxiliary but essential role in vivo by binding to the 5'-leader sequence and broadening the substrate specificity of the ribozyme.</text>
</comment>
<comment type="catalytic activity">
    <reaction evidence="1">
        <text>Endonucleolytic cleavage of RNA, removing 5'-extranucleotides from tRNA precursor.</text>
        <dbReference type="EC" id="3.1.26.5"/>
    </reaction>
</comment>
<comment type="subunit">
    <text evidence="1">Consists of a catalytic RNA component (M1 or rnpB) and a protein subunit.</text>
</comment>
<comment type="similarity">
    <text evidence="1">Belongs to the RnpA family.</text>
</comment>
<sequence>MKKKYRIKKNDDFQKVFRRGKSFANRQFVVYTLKQEGSNHFRIGLSVSKKIGNAVCRNRIKRYIRQSFHELEDQINPENEYIIIARKPAANMDFHEVKKSLIHVLKVGRVLKQKPNNSK</sequence>
<proteinExistence type="inferred from homology"/>